<accession>Q94225</accession>
<accession>Q58G77</accession>
<accession>Q58QG5</accession>
<proteinExistence type="evidence at transcript level"/>
<organism>
    <name type="scientific">Caenorhabditis elegans</name>
    <dbReference type="NCBI Taxonomy" id="6239"/>
    <lineage>
        <taxon>Eukaryota</taxon>
        <taxon>Metazoa</taxon>
        <taxon>Ecdysozoa</taxon>
        <taxon>Nematoda</taxon>
        <taxon>Chromadorea</taxon>
        <taxon>Rhabditida</taxon>
        <taxon>Rhabditina</taxon>
        <taxon>Rhabditomorpha</taxon>
        <taxon>Rhabditoidea</taxon>
        <taxon>Rhabditidae</taxon>
        <taxon>Peloderinae</taxon>
        <taxon>Caenorhabditis</taxon>
    </lineage>
</organism>
<feature type="chain" id="PRO_0000080193" description="Sulfate permease family protein 3">
    <location>
        <begin position="1"/>
        <end position="782"/>
    </location>
</feature>
<feature type="transmembrane region" description="Helical" evidence="1">
    <location>
        <begin position="30"/>
        <end position="52"/>
    </location>
</feature>
<feature type="transmembrane region" description="Helical" evidence="1">
    <location>
        <begin position="64"/>
        <end position="84"/>
    </location>
</feature>
<feature type="transmembrane region" description="Helical" evidence="1">
    <location>
        <begin position="86"/>
        <end position="106"/>
    </location>
</feature>
<feature type="transmembrane region" description="Helical" evidence="1">
    <location>
        <begin position="113"/>
        <end position="133"/>
    </location>
</feature>
<feature type="transmembrane region" description="Helical" evidence="1">
    <location>
        <begin position="196"/>
        <end position="216"/>
    </location>
</feature>
<feature type="transmembrane region" description="Helical" evidence="1">
    <location>
        <begin position="232"/>
        <end position="252"/>
    </location>
</feature>
<feature type="transmembrane region" description="Helical" evidence="1">
    <location>
        <begin position="274"/>
        <end position="294"/>
    </location>
</feature>
<feature type="transmembrane region" description="Helical" evidence="1">
    <location>
        <begin position="302"/>
        <end position="322"/>
    </location>
</feature>
<feature type="transmembrane region" description="Helical" evidence="1">
    <location>
        <begin position="359"/>
        <end position="379"/>
    </location>
</feature>
<feature type="transmembrane region" description="Helical" evidence="1">
    <location>
        <begin position="398"/>
        <end position="418"/>
    </location>
</feature>
<feature type="transmembrane region" description="Helical" evidence="1">
    <location>
        <begin position="433"/>
        <end position="453"/>
    </location>
</feature>
<feature type="transmembrane region" description="Helical" evidence="1">
    <location>
        <begin position="497"/>
        <end position="517"/>
    </location>
</feature>
<feature type="domain" description="STAS" evidence="2">
    <location>
        <begin position="546"/>
        <end position="700"/>
    </location>
</feature>
<feature type="region of interest" description="Disordered" evidence="3">
    <location>
        <begin position="728"/>
        <end position="782"/>
    </location>
</feature>
<feature type="compositionally biased region" description="Acidic residues" evidence="3">
    <location>
        <begin position="728"/>
        <end position="742"/>
    </location>
</feature>
<feature type="compositionally biased region" description="Polar residues" evidence="3">
    <location>
        <begin position="767"/>
        <end position="782"/>
    </location>
</feature>
<feature type="splice variant" id="VSP_019780" description="In isoform b." evidence="4">
    <original>VVVGITATNYAELSLRHDVKVVGNIPTE</original>
    <variation>LTHYLINR</variation>
    <location>
        <begin position="318"/>
        <end position="345"/>
    </location>
</feature>
<comment type="function">
    <text>Possible sulfate transporter.</text>
</comment>
<comment type="subcellular location">
    <subcellularLocation>
        <location evidence="5">Membrane</location>
        <topology evidence="5">Multi-pass membrane protein</topology>
    </subcellularLocation>
</comment>
<comment type="alternative products">
    <event type="alternative splicing"/>
    <isoform>
        <id>Q94225-1</id>
        <name>a</name>
        <sequence type="displayed"/>
    </isoform>
    <isoform>
        <id>Q94225-2</id>
        <name>b</name>
        <sequence type="described" ref="VSP_019780"/>
    </isoform>
</comment>
<comment type="similarity">
    <text evidence="5">Belongs to the SLC26A/SulP transporter (TC 2.A.53) family.</text>
</comment>
<name>SULP3_CAEEL</name>
<reference key="1">
    <citation type="journal article" date="2005" name="Am. J. Physiol.">
        <title>The abts and sulp families of anion transporters from Caenorhabditis elegans.</title>
        <authorList>
            <person name="Sherman T."/>
            <person name="Chernova M.N."/>
            <person name="Clark J.S."/>
            <person name="Jiang L."/>
            <person name="Alper S.L."/>
            <person name="Nehrke K."/>
        </authorList>
    </citation>
    <scope>NUCLEOTIDE SEQUENCE [MRNA] (ISOFORMS A AND B)</scope>
</reference>
<reference key="2">
    <citation type="journal article" date="1998" name="Science">
        <title>Genome sequence of the nematode C. elegans: a platform for investigating biology.</title>
        <authorList>
            <consortium name="The C. elegans sequencing consortium"/>
        </authorList>
    </citation>
    <scope>NUCLEOTIDE SEQUENCE [LARGE SCALE GENOMIC DNA]</scope>
    <source>
        <strain>Bristol N2</strain>
    </source>
</reference>
<gene>
    <name type="primary">sulp-3</name>
    <name type="ORF">F41D9.5</name>
</gene>
<dbReference type="EMBL" id="AY887909">
    <property type="protein sequence ID" value="AAX34421.1"/>
    <property type="molecule type" value="mRNA"/>
</dbReference>
<dbReference type="EMBL" id="AY954524">
    <property type="protein sequence ID" value="AAX34432.2"/>
    <property type="molecule type" value="mRNA"/>
</dbReference>
<dbReference type="EMBL" id="FO081091">
    <property type="protein sequence ID" value="CCD69047.1"/>
    <property type="molecule type" value="Genomic_DNA"/>
</dbReference>
<dbReference type="PIR" id="T25751">
    <property type="entry name" value="T25751"/>
</dbReference>
<dbReference type="RefSeq" id="NP_509424.2">
    <molecule id="Q94225-1"/>
    <property type="nucleotide sequence ID" value="NM_077023.5"/>
</dbReference>
<dbReference type="SMR" id="Q94225"/>
<dbReference type="BioGRID" id="46016">
    <property type="interactions" value="1"/>
</dbReference>
<dbReference type="FunCoup" id="Q94225">
    <property type="interactions" value="346"/>
</dbReference>
<dbReference type="STRING" id="6239.F41D9.5.1"/>
<dbReference type="TCDB" id="2.A.53.2.20">
    <property type="family name" value="the sulfate permease (sulp) family"/>
</dbReference>
<dbReference type="PaxDb" id="6239-F41D9.5"/>
<dbReference type="EnsemblMetazoa" id="F41D9.5.1">
    <molecule id="Q94225-1"/>
    <property type="protein sequence ID" value="F41D9.5.1"/>
    <property type="gene ID" value="WBGene00018283"/>
</dbReference>
<dbReference type="GeneID" id="181094"/>
<dbReference type="KEGG" id="cel:CELE_F41D9.5"/>
<dbReference type="UCSC" id="F41D9.5">
    <molecule id="Q94225-1"/>
    <property type="organism name" value="c. elegans"/>
</dbReference>
<dbReference type="AGR" id="WB:WBGene00018283"/>
<dbReference type="CTD" id="181094"/>
<dbReference type="WormBase" id="F41D9.5">
    <molecule id="Q94225-1"/>
    <property type="protein sequence ID" value="CE38957"/>
    <property type="gene ID" value="WBGene00018283"/>
    <property type="gene designation" value="sulp-3"/>
</dbReference>
<dbReference type="eggNOG" id="KOG0236">
    <property type="taxonomic scope" value="Eukaryota"/>
</dbReference>
<dbReference type="GeneTree" id="ENSGT01120000271864"/>
<dbReference type="HOGENOM" id="CLU_003182_9_4_1"/>
<dbReference type="InParanoid" id="Q94225"/>
<dbReference type="OMA" id="VCIFRMD"/>
<dbReference type="OrthoDB" id="288203at2759"/>
<dbReference type="PhylomeDB" id="Q94225"/>
<dbReference type="Reactome" id="R-CEL-174362">
    <property type="pathway name" value="Transport and synthesis of PAPS"/>
</dbReference>
<dbReference type="Reactome" id="R-CEL-427601">
    <property type="pathway name" value="Multifunctional anion exchangers"/>
</dbReference>
<dbReference type="PRO" id="PR:Q94225"/>
<dbReference type="Proteomes" id="UP000001940">
    <property type="component" value="Chromosome X"/>
</dbReference>
<dbReference type="Bgee" id="WBGene00018283">
    <property type="expression patterns" value="Expressed in pharyngeal muscle cell (C elegans) and 3 other cell types or tissues"/>
</dbReference>
<dbReference type="GO" id="GO:0005886">
    <property type="term" value="C:plasma membrane"/>
    <property type="evidence" value="ECO:0000318"/>
    <property type="project" value="GO_Central"/>
</dbReference>
<dbReference type="GO" id="GO:0015106">
    <property type="term" value="F:bicarbonate transmembrane transporter activity"/>
    <property type="evidence" value="ECO:0000318"/>
    <property type="project" value="GO_Central"/>
</dbReference>
<dbReference type="GO" id="GO:0015108">
    <property type="term" value="F:chloride transmembrane transporter activity"/>
    <property type="evidence" value="ECO:0000318"/>
    <property type="project" value="GO_Central"/>
</dbReference>
<dbReference type="GO" id="GO:0019531">
    <property type="term" value="F:oxalate transmembrane transporter activity"/>
    <property type="evidence" value="ECO:0000318"/>
    <property type="project" value="GO_Central"/>
</dbReference>
<dbReference type="GO" id="GO:0008271">
    <property type="term" value="F:secondary active sulfate transmembrane transporter activity"/>
    <property type="evidence" value="ECO:0007669"/>
    <property type="project" value="InterPro"/>
</dbReference>
<dbReference type="GO" id="GO:0015116">
    <property type="term" value="F:sulfate transmembrane transporter activity"/>
    <property type="evidence" value="ECO:0000318"/>
    <property type="project" value="GO_Central"/>
</dbReference>
<dbReference type="GO" id="GO:1902476">
    <property type="term" value="P:chloride transmembrane transport"/>
    <property type="evidence" value="ECO:0000318"/>
    <property type="project" value="GO_Central"/>
</dbReference>
<dbReference type="GO" id="GO:1902358">
    <property type="term" value="P:sulfate transmembrane transport"/>
    <property type="evidence" value="ECO:0000318"/>
    <property type="project" value="GO_Central"/>
</dbReference>
<dbReference type="CDD" id="cd07042">
    <property type="entry name" value="STAS_SulP_like_sulfate_transporter"/>
    <property type="match status" value="1"/>
</dbReference>
<dbReference type="Gene3D" id="3.30.750.24">
    <property type="entry name" value="STAS domain"/>
    <property type="match status" value="1"/>
</dbReference>
<dbReference type="InterPro" id="IPR018045">
    <property type="entry name" value="S04_transporter_CS"/>
</dbReference>
<dbReference type="InterPro" id="IPR011547">
    <property type="entry name" value="SLC26A/SulP_dom"/>
</dbReference>
<dbReference type="InterPro" id="IPR001902">
    <property type="entry name" value="SLC26A/SulP_fam"/>
</dbReference>
<dbReference type="InterPro" id="IPR002645">
    <property type="entry name" value="STAS_dom"/>
</dbReference>
<dbReference type="InterPro" id="IPR036513">
    <property type="entry name" value="STAS_dom_sf"/>
</dbReference>
<dbReference type="NCBIfam" id="TIGR00815">
    <property type="entry name" value="sulP"/>
    <property type="match status" value="1"/>
</dbReference>
<dbReference type="PANTHER" id="PTHR11814">
    <property type="entry name" value="SULFATE TRANSPORTER"/>
    <property type="match status" value="1"/>
</dbReference>
<dbReference type="Pfam" id="PF01740">
    <property type="entry name" value="STAS"/>
    <property type="match status" value="1"/>
</dbReference>
<dbReference type="Pfam" id="PF00916">
    <property type="entry name" value="Sulfate_transp"/>
    <property type="match status" value="1"/>
</dbReference>
<dbReference type="SUPFAM" id="SSF52091">
    <property type="entry name" value="SpoIIaa-like"/>
    <property type="match status" value="1"/>
</dbReference>
<dbReference type="PROSITE" id="PS01130">
    <property type="entry name" value="SLC26A"/>
    <property type="match status" value="1"/>
</dbReference>
<dbReference type="PROSITE" id="PS50801">
    <property type="entry name" value="STAS"/>
    <property type="match status" value="1"/>
</dbReference>
<evidence type="ECO:0000255" key="1"/>
<evidence type="ECO:0000255" key="2">
    <source>
        <dbReference type="PROSITE-ProRule" id="PRU00198"/>
    </source>
</evidence>
<evidence type="ECO:0000256" key="3">
    <source>
        <dbReference type="SAM" id="MobiDB-lite"/>
    </source>
</evidence>
<evidence type="ECO:0000303" key="4">
    <source>
    </source>
</evidence>
<evidence type="ECO:0000305" key="5"/>
<protein>
    <recommendedName>
        <fullName>Sulfate permease family protein 3</fullName>
    </recommendedName>
</protein>
<keyword id="KW-0025">Alternative splicing</keyword>
<keyword id="KW-0472">Membrane</keyword>
<keyword id="KW-1185">Reference proteome</keyword>
<keyword id="KW-0812">Transmembrane</keyword>
<keyword id="KW-1133">Transmembrane helix</keyword>
<keyword id="KW-0813">Transport</keyword>
<sequence>MYKKMSLRQLFSDRPPLNAVLQEKAQKLRYACSPSKCIHSLLSFLPIITWLPKYDWSHSFFGDLSGGLTMAVFSVPQGIALASITGVPPVYGLYTAIFPSFLYIFFGTSKHNALGGFAVLSLMTHGAIEKVMLRTATSYNATAYVNHTLDELLDKENETALISNTTLMQILGNETSFVEEVTMEMWTEGVTPVKQIHVATTIIFLAGVIQVFMGVFRLQYLTSLFSEQVMSGFVVGGGIHVFFAQIGNMLGIELPRRSGPGYLYYRIWDLVENLDNVHIPTVCISLSSFLFLVFGKEYLAPWLNSAFNYPVPFELVLVVVGITATNYAELSLRHDVKVVGNIPTEFPPPSLPRFDLIRHIGLNAAAIAITAVAIHITVAKVVEKRYKYKINHGQELYALGFVGVLSSFFPVFPVTSGFARSVVGAAVGGSTQLTCLFSSLALLSVILCIGPALEYLPQCILSAMIIFAQKGMLEKFGELKSLWPVFKIDFTIWLMSFFLTVCYDMGEGLLMAIGFAVLTTIIRTQRPKWHFLSRDDDTENYKETKKRDLERIQGNVCIFRMDAPLIFTSSDRFTMSVWQCVKKWERCKSESFVTIEQMNSDRSADIFDSKLKSARRRWKRDQKSENRCKLVIDCDGFPYVDYLGLSTLKSVYVDLQAAGIQCFFVVQKSDLKKLFRATDFYEVVDESKVFNKVGDAVKAAEQHISSPKTTKEILTALASIATTDTVLIDEESSDSNDNDDAEIQERITEESENSEEVMSETSVSIEDATSLTSSRNSINSEE</sequence>